<accession>Q07266</accession>
<accession>A5D6R1</accession>
<accession>O70205</accession>
<name>DREB_RAT</name>
<feature type="initiator methionine" description="Removed" evidence="2">
    <location>
        <position position="1"/>
    </location>
</feature>
<feature type="chain" id="PRO_0000080010" description="Drebrin">
    <location>
        <begin position="2"/>
        <end position="707"/>
    </location>
</feature>
<feature type="domain" description="ADF-H" evidence="4">
    <location>
        <begin position="3"/>
        <end position="134"/>
    </location>
</feature>
<feature type="region of interest" description="Disordered" evidence="5">
    <location>
        <begin position="209"/>
        <end position="438"/>
    </location>
</feature>
<feature type="region of interest" description="Disordered" evidence="5">
    <location>
        <begin position="452"/>
        <end position="497"/>
    </location>
</feature>
<feature type="region of interest" description="Disordered" evidence="5">
    <location>
        <begin position="531"/>
        <end position="557"/>
    </location>
</feature>
<feature type="region of interest" description="Disordered" evidence="5">
    <location>
        <begin position="582"/>
        <end position="609"/>
    </location>
</feature>
<feature type="region of interest" description="Disordered" evidence="5">
    <location>
        <begin position="630"/>
        <end position="707"/>
    </location>
</feature>
<feature type="compositionally biased region" description="Basic and acidic residues" evidence="5">
    <location>
        <begin position="209"/>
        <end position="236"/>
    </location>
</feature>
<feature type="compositionally biased region" description="Basic and acidic residues" evidence="5">
    <location>
        <begin position="288"/>
        <end position="298"/>
    </location>
</feature>
<feature type="compositionally biased region" description="Low complexity" evidence="5">
    <location>
        <begin position="329"/>
        <end position="343"/>
    </location>
</feature>
<feature type="compositionally biased region" description="Polar residues" evidence="5">
    <location>
        <begin position="355"/>
        <end position="364"/>
    </location>
</feature>
<feature type="compositionally biased region" description="Polar residues" evidence="5">
    <location>
        <begin position="380"/>
        <end position="395"/>
    </location>
</feature>
<feature type="compositionally biased region" description="Pro residues" evidence="5">
    <location>
        <begin position="409"/>
        <end position="420"/>
    </location>
</feature>
<feature type="compositionally biased region" description="Basic and acidic residues" evidence="5">
    <location>
        <begin position="428"/>
        <end position="438"/>
    </location>
</feature>
<feature type="compositionally biased region" description="Polar residues" evidence="5">
    <location>
        <begin position="639"/>
        <end position="652"/>
    </location>
</feature>
<feature type="compositionally biased region" description="Acidic residues" evidence="5">
    <location>
        <begin position="695"/>
        <end position="707"/>
    </location>
</feature>
<feature type="modified residue" description="N-acetylalanine" evidence="2">
    <location>
        <position position="2"/>
    </location>
</feature>
<feature type="modified residue" description="Phosphoserine" evidence="2">
    <location>
        <position position="141"/>
    </location>
</feature>
<feature type="modified residue" description="Phosphoserine" evidence="9">
    <location>
        <position position="142"/>
    </location>
</feature>
<feature type="modified residue" description="Phosphoserine" evidence="3">
    <location>
        <position position="241"/>
    </location>
</feature>
<feature type="modified residue" description="Phosphoserine" evidence="9">
    <location>
        <position position="342"/>
    </location>
</feature>
<feature type="modified residue" description="Phosphothreonine" evidence="2">
    <location>
        <position position="377"/>
    </location>
</feature>
<feature type="modified residue" description="Phosphothreonine" evidence="2">
    <location>
        <position position="381"/>
    </location>
</feature>
<feature type="modified residue" description="Phosphoserine" evidence="2">
    <location>
        <position position="383"/>
    </location>
</feature>
<feature type="modified residue" description="Phosphoserine" evidence="9">
    <location>
        <position position="385"/>
    </location>
</feature>
<feature type="modified residue" description="Phosphoserine" evidence="3">
    <location>
        <position position="391"/>
    </location>
</feature>
<feature type="modified residue" description="Phosphothreonine" evidence="2">
    <location>
        <position position="392"/>
    </location>
</feature>
<feature type="modified residue" description="Phosphoserine" evidence="2">
    <location>
        <position position="467"/>
    </location>
</feature>
<feature type="modified residue" description="Phosphothreonine" evidence="2">
    <location>
        <position position="549"/>
    </location>
</feature>
<feature type="modified residue" description="Phosphoserine" evidence="3">
    <location>
        <position position="659"/>
    </location>
</feature>
<feature type="splice variant" id="VSP_004201" description="In isoform E1." evidence="6 7">
    <location>
        <begin position="320"/>
        <end position="365"/>
    </location>
</feature>
<feature type="sequence conflict" description="In Ref. 2; BAA28746." evidence="8" ref="2">
    <original>S</original>
    <variation>P</variation>
    <location>
        <position position="387"/>
    </location>
</feature>
<feature type="sequence conflict" description="In Ref. 2; BAA28746." evidence="8" ref="2">
    <original>L</original>
    <variation>R</variation>
    <location>
        <position position="588"/>
    </location>
</feature>
<feature type="sequence conflict" description="In Ref. 2; BAA28746." evidence="8" ref="2">
    <original>A</original>
    <variation>V</variation>
    <location>
        <position position="618"/>
    </location>
</feature>
<feature type="sequence conflict" description="In Ref. 3; AAI39848." evidence="8" ref="3">
    <location>
        <position position="650"/>
    </location>
</feature>
<protein>
    <recommendedName>
        <fullName>Drebrin</fullName>
    </recommendedName>
    <alternativeName>
        <fullName>Developmentally-regulated brain protein</fullName>
    </alternativeName>
</protein>
<sequence>MAGVSFSGHRLELLAAYEEVIREESAADWALYTYEDGSDDLKLAASGEGGLQELSGHFENQKVMYGFCSVKDSQAALPKYVLINWVGEDVPDARKCACASHVAKVAEFFQGVDVIVNASSVEDIDAGAIGQRLSNGLARLSSPVLHRLRLREDENAEPVGTTYQKTDAAVEMKRINREQFWEQAKKEEELRKEEERKKALDARLRFEQERMEQERQEQEERERRYREREQQIEEHRRKQQSLEAEEAKRRLKDQSIFGDQRDEEEESQMKKSESEVEEAAAIIAQRPDNPREFFRQQERVASASGGSCDAPSPFNHRPGRPYCPFIKASDSGPSSSSSSSSSPPRTPFPYITCHRTPNLSSSLPCSHLDSHRRMAPTPIPTRSPSDSSTASTPITEQIERALDEVTSSQPPPPPPPPPPAQEAQESAPRLDGEEVCKEAKVAAAPQVWAGCAEEPPRAQEPPLLQSSPTEDLMCTESPEQAVLAASPEPDASVTSVADAHAADTIETTTATTATTIADNVTPAAASLIDLWPGNGEEASTPQAEPRVPTPPSGAEASLAEVPLLNEAAQEPLPPVGEGCANLLNFDELPEPPATFCDPEEEAEGEPLAASQVLTMPSALEEVDQVLEQELEPEPHLLTNGETTQKEGTQQASEGYFSQSQEEEFAQSEEPCAKAPPPVFYNKPPEIDITCWDADPVPEEEEGFEGGD</sequence>
<keyword id="KW-0007">Acetylation</keyword>
<keyword id="KW-0009">Actin-binding</keyword>
<keyword id="KW-0025">Alternative splicing</keyword>
<keyword id="KW-0965">Cell junction</keyword>
<keyword id="KW-0966">Cell projection</keyword>
<keyword id="KW-0963">Cytoplasm</keyword>
<keyword id="KW-0217">Developmental protein</keyword>
<keyword id="KW-0221">Differentiation</keyword>
<keyword id="KW-0524">Neurogenesis</keyword>
<keyword id="KW-0597">Phosphoprotein</keyword>
<keyword id="KW-1185">Reference proteome</keyword>
<keyword id="KW-0832">Ubl conjugation</keyword>
<comment type="function">
    <text evidence="2 3">Actin cytoskeleton-organizing protein that plays a role in the formation of cell projections (By similarity). Required for actin polymerization at immunological synapses (IS) and for the recruitment of the chemokine receptor CXCR4 to IS (By similarity). Plays a role in dendritic spine morphogenesis and organization, including the localization of the dopamine receptor DRD1 to the dendritic spines (By similarity). Involved in memory-related synaptic plasticity in the hippocampus (By similarity).</text>
</comment>
<comment type="subunit">
    <text evidence="2 3">Interacts with RUFY (By similarity). Interacts with CXCR4; this interaction is enhanced by antigenic stimulation (By similarity). Interacts (via ADF-H domain) with ZMYND8 (via N-terminus); the interaction leads to sequestering of ZMYND8 in the cytoplasm (By similarity).</text>
</comment>
<comment type="interaction">
    <interactant intactId="EBI-918187">
        <id>Q07266</id>
    </interactant>
    <interactant intactId="EBI-8074312">
        <id>O54857</id>
        <label>Pten</label>
    </interactant>
    <organismsDiffer>false</organismsDiffer>
    <experiments>3</experiments>
</comment>
<comment type="interaction">
    <interactant intactId="EBI-918187">
        <id>Q07266</id>
    </interactant>
    <interactant intactId="EBI-9004258">
        <id>A8C4G9</id>
        <label>Zmynd8</label>
    </interactant>
    <organismsDiffer>false</organismsDiffer>
    <experiments>9</experiments>
</comment>
<comment type="interaction">
    <interactant intactId="EBI-8786792">
        <id>Q07266-1</id>
    </interactant>
    <interactant intactId="EBI-489411">
        <id>P61073</id>
        <label>CXCR4</label>
    </interactant>
    <organismsDiffer>true</organismsDiffer>
    <experiments>3</experiments>
</comment>
<comment type="subcellular location">
    <subcellularLocation>
        <location evidence="2">Cytoplasm</location>
    </subcellularLocation>
    <subcellularLocation>
        <location evidence="2">Cell projection</location>
        <location evidence="2">Dendrite</location>
    </subcellularLocation>
    <subcellularLocation>
        <location evidence="2">Cytoplasm</location>
        <location evidence="2">Cell cortex</location>
    </subcellularLocation>
    <subcellularLocation>
        <location evidence="2">Cell junction</location>
    </subcellularLocation>
    <subcellularLocation>
        <location evidence="3">Cell projection</location>
    </subcellularLocation>
    <subcellularLocation>
        <location evidence="3">Cell projection</location>
        <location evidence="3">Growth cone</location>
    </subcellularLocation>
    <text evidence="2 3">In the absence of antigen, evenly distributed throughout subcortical regions of the T-cell membrane and cytoplasm. In the presence of antigen, distributes to the immunological synapse forming at the T-cell-APC contact area, where it localizes at the peripheral and distal supramolecular activation clusters (SMAC). Colocalized with RUFY3 and F-actin at the transitional domain of the axonal growth cone.</text>
</comment>
<comment type="alternative products">
    <event type="alternative splicing"/>
    <isoform>
        <id>Q07266-1</id>
        <name>A</name>
        <sequence type="displayed"/>
    </isoform>
    <isoform>
        <id>Q07266-2</id>
        <name>E1</name>
        <sequence type="described" ref="VSP_004201"/>
    </isoform>
    <isoform>
        <id>Q07266-3</id>
        <name>E2</name>
        <sequence type="not described"/>
    </isoform>
</comment>
<comment type="tissue specificity">
    <text>Brain neurons.</text>
</comment>
<comment type="PTM">
    <text evidence="1">ISGylated.</text>
</comment>
<comment type="miscellaneous">
    <text>Drebrins are classified into two forms of the embryonic type (E1 and E2) and one form of the adult type (A). The time course of their appearance are different from each other. Their structures are closely related. Adult rat brain expresses only drebrin A while drebrin E1 or E2 is observed in immature animals.</text>
</comment>
<organism>
    <name type="scientific">Rattus norvegicus</name>
    <name type="common">Rat</name>
    <dbReference type="NCBI Taxonomy" id="10116"/>
    <lineage>
        <taxon>Eukaryota</taxon>
        <taxon>Metazoa</taxon>
        <taxon>Chordata</taxon>
        <taxon>Craniata</taxon>
        <taxon>Vertebrata</taxon>
        <taxon>Euteleostomi</taxon>
        <taxon>Mammalia</taxon>
        <taxon>Eutheria</taxon>
        <taxon>Euarchontoglires</taxon>
        <taxon>Glires</taxon>
        <taxon>Rodentia</taxon>
        <taxon>Myomorpha</taxon>
        <taxon>Muroidea</taxon>
        <taxon>Muridae</taxon>
        <taxon>Murinae</taxon>
        <taxon>Rattus</taxon>
    </lineage>
</organism>
<gene>
    <name type="primary">Dbn1</name>
</gene>
<dbReference type="EMBL" id="X59267">
    <property type="protein sequence ID" value="CAA41957.1"/>
    <property type="molecule type" value="mRNA"/>
</dbReference>
<dbReference type="EMBL" id="AB015042">
    <property type="protein sequence ID" value="BAA28746.1"/>
    <property type="molecule type" value="mRNA"/>
</dbReference>
<dbReference type="EMBL" id="BC139847">
    <property type="protein sequence ID" value="AAI39848.1"/>
    <property type="molecule type" value="mRNA"/>
</dbReference>
<dbReference type="PIR" id="S60588">
    <property type="entry name" value="S60588"/>
</dbReference>
<dbReference type="RefSeq" id="NP_112286.1">
    <molecule id="Q07266-1"/>
    <property type="nucleotide sequence ID" value="NM_031024.2"/>
</dbReference>
<dbReference type="RefSeq" id="XP_006253718.1">
    <molecule id="Q07266-2"/>
    <property type="nucleotide sequence ID" value="XM_006253656.5"/>
</dbReference>
<dbReference type="RefSeq" id="XP_006253719.1">
    <property type="nucleotide sequence ID" value="XM_006253657.3"/>
</dbReference>
<dbReference type="SMR" id="Q07266"/>
<dbReference type="BioGRID" id="249553">
    <property type="interactions" value="10"/>
</dbReference>
<dbReference type="FunCoup" id="Q07266">
    <property type="interactions" value="746"/>
</dbReference>
<dbReference type="IntAct" id="Q07266">
    <property type="interactions" value="6"/>
</dbReference>
<dbReference type="MINT" id="Q07266"/>
<dbReference type="STRING" id="10116.ENSRNOP00000019569"/>
<dbReference type="GlyGen" id="Q07266">
    <property type="glycosylation" value="1 site"/>
</dbReference>
<dbReference type="iPTMnet" id="Q07266"/>
<dbReference type="PhosphoSitePlus" id="Q07266"/>
<dbReference type="SwissPalm" id="Q07266"/>
<dbReference type="jPOST" id="Q07266"/>
<dbReference type="PaxDb" id="10116-ENSRNOP00000019569"/>
<dbReference type="Ensembl" id="ENSRNOT00000019393.5">
    <molecule id="Q07266-2"/>
    <property type="protein sequence ID" value="ENSRNOP00000019393.2"/>
    <property type="gene ID" value="ENSRNOG00000014170.8"/>
</dbReference>
<dbReference type="GeneID" id="81653"/>
<dbReference type="KEGG" id="rno:81653"/>
<dbReference type="UCSC" id="RGD:70885">
    <molecule id="Q07266-1"/>
    <property type="organism name" value="rat"/>
</dbReference>
<dbReference type="AGR" id="RGD:70885"/>
<dbReference type="CTD" id="1627"/>
<dbReference type="RGD" id="70885">
    <property type="gene designation" value="Dbn1"/>
</dbReference>
<dbReference type="VEuPathDB" id="HostDB:ENSRNOG00000014170"/>
<dbReference type="eggNOG" id="KOG3655">
    <property type="taxonomic scope" value="Eukaryota"/>
</dbReference>
<dbReference type="GeneTree" id="ENSGT00940000159431"/>
<dbReference type="HOGENOM" id="CLU_013085_3_0_1"/>
<dbReference type="InParanoid" id="Q07266"/>
<dbReference type="OrthoDB" id="84547at9989"/>
<dbReference type="PhylomeDB" id="Q07266"/>
<dbReference type="TreeFam" id="TF318935"/>
<dbReference type="PRO" id="PR:Q07266"/>
<dbReference type="Proteomes" id="UP000002494">
    <property type="component" value="Chromosome 17"/>
</dbReference>
<dbReference type="Bgee" id="ENSRNOG00000014170">
    <property type="expression patterns" value="Expressed in frontal cortex and 20 other cell types or tissues"/>
</dbReference>
<dbReference type="ExpressionAtlas" id="Q07266">
    <property type="expression patterns" value="baseline and differential"/>
</dbReference>
<dbReference type="GO" id="GO:0015629">
    <property type="term" value="C:actin cytoskeleton"/>
    <property type="evidence" value="ECO:0000250"/>
    <property type="project" value="UniProtKB"/>
</dbReference>
<dbReference type="GO" id="GO:0005884">
    <property type="term" value="C:actin filament"/>
    <property type="evidence" value="ECO:0000314"/>
    <property type="project" value="RGD"/>
</dbReference>
<dbReference type="GO" id="GO:0032279">
    <property type="term" value="C:asymmetric synapse"/>
    <property type="evidence" value="ECO:0000314"/>
    <property type="project" value="RGD"/>
</dbReference>
<dbReference type="GO" id="GO:0044295">
    <property type="term" value="C:axonal growth cone"/>
    <property type="evidence" value="ECO:0000314"/>
    <property type="project" value="RGD"/>
</dbReference>
<dbReference type="GO" id="GO:0044308">
    <property type="term" value="C:axonal spine"/>
    <property type="evidence" value="ECO:0000314"/>
    <property type="project" value="RGD"/>
</dbReference>
<dbReference type="GO" id="GO:0005911">
    <property type="term" value="C:cell-cell junction"/>
    <property type="evidence" value="ECO:0000314"/>
    <property type="project" value="RGD"/>
</dbReference>
<dbReference type="GO" id="GO:0030864">
    <property type="term" value="C:cortical actin cytoskeleton"/>
    <property type="evidence" value="ECO:0000318"/>
    <property type="project" value="GO_Central"/>
</dbReference>
<dbReference type="GO" id="GO:0005737">
    <property type="term" value="C:cytoplasm"/>
    <property type="evidence" value="ECO:0000266"/>
    <property type="project" value="RGD"/>
</dbReference>
<dbReference type="GO" id="GO:0005856">
    <property type="term" value="C:cytoskeleton"/>
    <property type="evidence" value="ECO:0000266"/>
    <property type="project" value="RGD"/>
</dbReference>
<dbReference type="GO" id="GO:0030425">
    <property type="term" value="C:dendrite"/>
    <property type="evidence" value="ECO:0000266"/>
    <property type="project" value="RGD"/>
</dbReference>
<dbReference type="GO" id="GO:1902737">
    <property type="term" value="C:dendritic filopodium"/>
    <property type="evidence" value="ECO:0000314"/>
    <property type="project" value="RGD"/>
</dbReference>
<dbReference type="GO" id="GO:0043198">
    <property type="term" value="C:dendritic shaft"/>
    <property type="evidence" value="ECO:0000314"/>
    <property type="project" value="RGD"/>
</dbReference>
<dbReference type="GO" id="GO:0043197">
    <property type="term" value="C:dendritic spine"/>
    <property type="evidence" value="ECO:0000314"/>
    <property type="project" value="RGD"/>
</dbReference>
<dbReference type="GO" id="GO:0060076">
    <property type="term" value="C:excitatory synapse"/>
    <property type="evidence" value="ECO:0000314"/>
    <property type="project" value="RGD"/>
</dbReference>
<dbReference type="GO" id="GO:0030175">
    <property type="term" value="C:filopodium"/>
    <property type="evidence" value="ECO:0000314"/>
    <property type="project" value="RGD"/>
</dbReference>
<dbReference type="GO" id="GO:0005921">
    <property type="term" value="C:gap junction"/>
    <property type="evidence" value="ECO:0000266"/>
    <property type="project" value="RGD"/>
</dbReference>
<dbReference type="GO" id="GO:0098978">
    <property type="term" value="C:glutamatergic synapse"/>
    <property type="evidence" value="ECO:0000314"/>
    <property type="project" value="SynGO"/>
</dbReference>
<dbReference type="GO" id="GO:0030426">
    <property type="term" value="C:growth cone"/>
    <property type="evidence" value="ECO:0000250"/>
    <property type="project" value="UniProtKB"/>
</dbReference>
<dbReference type="GO" id="GO:0030027">
    <property type="term" value="C:lamellipodium"/>
    <property type="evidence" value="ECO:0000314"/>
    <property type="project" value="RGD"/>
</dbReference>
<dbReference type="GO" id="GO:0016020">
    <property type="term" value="C:membrane"/>
    <property type="evidence" value="ECO:0000266"/>
    <property type="project" value="RGD"/>
</dbReference>
<dbReference type="GO" id="GO:0044309">
    <property type="term" value="C:neuron spine"/>
    <property type="evidence" value="ECO:0000314"/>
    <property type="project" value="RGD"/>
</dbReference>
<dbReference type="GO" id="GO:0043025">
    <property type="term" value="C:neuronal cell body"/>
    <property type="evidence" value="ECO:0000314"/>
    <property type="project" value="RGD"/>
</dbReference>
<dbReference type="GO" id="GO:0048471">
    <property type="term" value="C:perinuclear region of cytoplasm"/>
    <property type="evidence" value="ECO:0000314"/>
    <property type="project" value="RGD"/>
</dbReference>
<dbReference type="GO" id="GO:0005886">
    <property type="term" value="C:plasma membrane"/>
    <property type="evidence" value="ECO:0000266"/>
    <property type="project" value="RGD"/>
</dbReference>
<dbReference type="GO" id="GO:0098871">
    <property type="term" value="C:postsynaptic actin cytoskeleton"/>
    <property type="evidence" value="ECO:0000314"/>
    <property type="project" value="SynGO"/>
</dbReference>
<dbReference type="GO" id="GO:0099524">
    <property type="term" value="C:postsynaptic cytosol"/>
    <property type="evidence" value="ECO:0000266"/>
    <property type="project" value="RGD"/>
</dbReference>
<dbReference type="GO" id="GO:0014069">
    <property type="term" value="C:postsynaptic density"/>
    <property type="evidence" value="ECO:0000266"/>
    <property type="project" value="RGD"/>
</dbReference>
<dbReference type="GO" id="GO:0045211">
    <property type="term" value="C:postsynaptic membrane"/>
    <property type="evidence" value="ECO:0000314"/>
    <property type="project" value="RGD"/>
</dbReference>
<dbReference type="GO" id="GO:0030427">
    <property type="term" value="C:site of polarized growth"/>
    <property type="evidence" value="ECO:0000318"/>
    <property type="project" value="GO_Central"/>
</dbReference>
<dbReference type="GO" id="GO:0051015">
    <property type="term" value="F:actin filament binding"/>
    <property type="evidence" value="ECO:0000314"/>
    <property type="project" value="RGD"/>
</dbReference>
<dbReference type="GO" id="GO:0140661">
    <property type="term" value="F:cytoskeletal motor inhibitor activity"/>
    <property type="evidence" value="ECO:0000314"/>
    <property type="project" value="RGD"/>
</dbReference>
<dbReference type="GO" id="GO:0008092">
    <property type="term" value="F:cytoskeletal protein binding"/>
    <property type="evidence" value="ECO:0000353"/>
    <property type="project" value="RGD"/>
</dbReference>
<dbReference type="GO" id="GO:0005522">
    <property type="term" value="F:profilin binding"/>
    <property type="evidence" value="ECO:0000314"/>
    <property type="project" value="UniProtKB"/>
</dbReference>
<dbReference type="GO" id="GO:0140311">
    <property type="term" value="F:protein sequestering activity"/>
    <property type="evidence" value="ECO:0000250"/>
    <property type="project" value="UniProtKB"/>
</dbReference>
<dbReference type="GO" id="GO:0007015">
    <property type="term" value="P:actin filament organization"/>
    <property type="evidence" value="ECO:0000250"/>
    <property type="project" value="UniProtKB"/>
</dbReference>
<dbReference type="GO" id="GO:0010643">
    <property type="term" value="P:cell communication by chemical coupling"/>
    <property type="evidence" value="ECO:0000266"/>
    <property type="project" value="RGD"/>
</dbReference>
<dbReference type="GO" id="GO:0010644">
    <property type="term" value="P:cell communication by electrical coupling"/>
    <property type="evidence" value="ECO:0000266"/>
    <property type="project" value="RGD"/>
</dbReference>
<dbReference type="GO" id="GO:0071560">
    <property type="term" value="P:cellular response to transforming growth factor beta stimulus"/>
    <property type="evidence" value="ECO:0000314"/>
    <property type="project" value="RGD"/>
</dbReference>
<dbReference type="GO" id="GO:0071356">
    <property type="term" value="P:cellular response to tumor necrosis factor"/>
    <property type="evidence" value="ECO:0000314"/>
    <property type="project" value="RGD"/>
</dbReference>
<dbReference type="GO" id="GO:0071481">
    <property type="term" value="P:cellular response to X-ray"/>
    <property type="evidence" value="ECO:0000270"/>
    <property type="project" value="RGD"/>
</dbReference>
<dbReference type="GO" id="GO:0048699">
    <property type="term" value="P:generation of neurons"/>
    <property type="evidence" value="ECO:0000266"/>
    <property type="project" value="RGD"/>
</dbReference>
<dbReference type="GO" id="GO:0001701">
    <property type="term" value="P:in utero embryonic development"/>
    <property type="evidence" value="ECO:0000266"/>
    <property type="project" value="RGD"/>
</dbReference>
<dbReference type="GO" id="GO:0048286">
    <property type="term" value="P:lung alveolus development"/>
    <property type="evidence" value="ECO:0000270"/>
    <property type="project" value="RGD"/>
</dbReference>
<dbReference type="GO" id="GO:0032507">
    <property type="term" value="P:maintenance of protein location in cell"/>
    <property type="evidence" value="ECO:0000266"/>
    <property type="project" value="RGD"/>
</dbReference>
<dbReference type="GO" id="GO:0098828">
    <property type="term" value="P:modulation of inhibitory postsynaptic potential"/>
    <property type="evidence" value="ECO:0000315"/>
    <property type="project" value="RGD"/>
</dbReference>
<dbReference type="GO" id="GO:0032232">
    <property type="term" value="P:negative regulation of actin filament bundle assembly"/>
    <property type="evidence" value="ECO:0000314"/>
    <property type="project" value="RGD"/>
</dbReference>
<dbReference type="GO" id="GO:0090327">
    <property type="term" value="P:negative regulation of locomotion involved in locomotory behavior"/>
    <property type="evidence" value="ECO:0000315"/>
    <property type="project" value="RGD"/>
</dbReference>
<dbReference type="GO" id="GO:1904113">
    <property type="term" value="P:negative regulation of muscle filament sliding"/>
    <property type="evidence" value="ECO:0000314"/>
    <property type="project" value="RGD"/>
</dbReference>
<dbReference type="GO" id="GO:0007399">
    <property type="term" value="P:nervous system development"/>
    <property type="evidence" value="ECO:0000270"/>
    <property type="project" value="RGD"/>
</dbReference>
<dbReference type="GO" id="GO:0061351">
    <property type="term" value="P:neural precursor cell proliferation"/>
    <property type="evidence" value="ECO:0000266"/>
    <property type="project" value="RGD"/>
</dbReference>
<dbReference type="GO" id="GO:0048812">
    <property type="term" value="P:neuron projection morphogenesis"/>
    <property type="evidence" value="ECO:0000318"/>
    <property type="project" value="GO_Central"/>
</dbReference>
<dbReference type="GO" id="GO:0045773">
    <property type="term" value="P:positive regulation of axon extension"/>
    <property type="evidence" value="ECO:0000315"/>
    <property type="project" value="RGD"/>
</dbReference>
<dbReference type="GO" id="GO:0010811">
    <property type="term" value="P:positive regulation of cell-substrate adhesion"/>
    <property type="evidence" value="ECO:0000314"/>
    <property type="project" value="RGD"/>
</dbReference>
<dbReference type="GO" id="GO:0061003">
    <property type="term" value="P:positive regulation of dendritic spine morphogenesis"/>
    <property type="evidence" value="ECO:0000315"/>
    <property type="project" value="RGD"/>
</dbReference>
<dbReference type="GO" id="GO:2000463">
    <property type="term" value="P:positive regulation of excitatory postsynaptic potential"/>
    <property type="evidence" value="ECO:0000315"/>
    <property type="project" value="RGD"/>
</dbReference>
<dbReference type="GO" id="GO:0010976">
    <property type="term" value="P:positive regulation of neuron projection development"/>
    <property type="evidence" value="ECO:0000314"/>
    <property type="project" value="RGD"/>
</dbReference>
<dbReference type="GO" id="GO:1902685">
    <property type="term" value="P:positive regulation of receptor localization to synapse"/>
    <property type="evidence" value="ECO:0000250"/>
    <property type="project" value="UniProtKB"/>
</dbReference>
<dbReference type="GO" id="GO:1900026">
    <property type="term" value="P:positive regulation of substrate adhesion-dependent cell spreading"/>
    <property type="evidence" value="ECO:0000314"/>
    <property type="project" value="RGD"/>
</dbReference>
<dbReference type="GO" id="GO:0031915">
    <property type="term" value="P:positive regulation of synaptic plasticity"/>
    <property type="evidence" value="ECO:0000250"/>
    <property type="project" value="UniProtKB"/>
</dbReference>
<dbReference type="GO" id="GO:0098974">
    <property type="term" value="P:postsynaptic actin cytoskeleton organization"/>
    <property type="evidence" value="ECO:0000314"/>
    <property type="project" value="SynGO"/>
</dbReference>
<dbReference type="GO" id="GO:0060134">
    <property type="term" value="P:prepulse inhibition"/>
    <property type="evidence" value="ECO:0000315"/>
    <property type="project" value="RGD"/>
</dbReference>
<dbReference type="GO" id="GO:0030833">
    <property type="term" value="P:regulation of actin filament polymerization"/>
    <property type="evidence" value="ECO:0000315"/>
    <property type="project" value="RGD"/>
</dbReference>
<dbReference type="GO" id="GO:0051489">
    <property type="term" value="P:regulation of filopodium assembly"/>
    <property type="evidence" value="ECO:0000315"/>
    <property type="project" value="RGD"/>
</dbReference>
<dbReference type="GO" id="GO:1902897">
    <property type="term" value="P:regulation of postsynaptic density protein 95 clustering"/>
    <property type="evidence" value="ECO:0000315"/>
    <property type="project" value="RGD"/>
</dbReference>
<dbReference type="GO" id="GO:0014823">
    <property type="term" value="P:response to activity"/>
    <property type="evidence" value="ECO:0000270"/>
    <property type="project" value="RGD"/>
</dbReference>
<dbReference type="GO" id="GO:0009410">
    <property type="term" value="P:response to xenobiotic stimulus"/>
    <property type="evidence" value="ECO:0000270"/>
    <property type="project" value="RGD"/>
</dbReference>
<dbReference type="GO" id="GO:0007283">
    <property type="term" value="P:spermatogenesis"/>
    <property type="evidence" value="ECO:0000270"/>
    <property type="project" value="RGD"/>
</dbReference>
<dbReference type="CDD" id="cd11281">
    <property type="entry name" value="ADF_drebrin_like"/>
    <property type="match status" value="1"/>
</dbReference>
<dbReference type="FunFam" id="3.40.20.10:FF:000032">
    <property type="entry name" value="Drebrin 1"/>
    <property type="match status" value="1"/>
</dbReference>
<dbReference type="Gene3D" id="3.40.20.10">
    <property type="entry name" value="Severin"/>
    <property type="match status" value="1"/>
</dbReference>
<dbReference type="InterPro" id="IPR002108">
    <property type="entry name" value="ADF-H"/>
</dbReference>
<dbReference type="InterPro" id="IPR029006">
    <property type="entry name" value="ADF-H/Gelsolin-like_dom_sf"/>
</dbReference>
<dbReference type="PANTHER" id="PTHR10829">
    <property type="entry name" value="CORTACTIN AND DREBRIN"/>
    <property type="match status" value="1"/>
</dbReference>
<dbReference type="PANTHER" id="PTHR10829:SF1">
    <property type="entry name" value="DREBRIN"/>
    <property type="match status" value="1"/>
</dbReference>
<dbReference type="Pfam" id="PF00241">
    <property type="entry name" value="Cofilin_ADF"/>
    <property type="match status" value="1"/>
</dbReference>
<dbReference type="SMART" id="SM00102">
    <property type="entry name" value="ADF"/>
    <property type="match status" value="1"/>
</dbReference>
<dbReference type="SUPFAM" id="SSF55753">
    <property type="entry name" value="Actin depolymerizing proteins"/>
    <property type="match status" value="1"/>
</dbReference>
<dbReference type="PROSITE" id="PS51263">
    <property type="entry name" value="ADF_H"/>
    <property type="match status" value="1"/>
</dbReference>
<proteinExistence type="evidence at protein level"/>
<reference key="1">
    <citation type="journal article" date="1992" name="NeuroReport">
        <title>Cloning of drebrin A and induction of neurite-like processes in drebrin-transfected cells.</title>
        <authorList>
            <person name="Shirao T."/>
            <person name="Obata N."/>
            <person name="Obata K."/>
        </authorList>
    </citation>
    <scope>NUCLEOTIDE SEQUENCE [MRNA] (ISOFORM A)</scope>
    <source>
        <strain>Wistar</strain>
        <tissue>Brain</tissue>
        <tissue>Hippocampus</tissue>
    </source>
</reference>
<reference key="2">
    <citation type="submission" date="1998-05" db="EMBL/GenBank/DDBJ databases">
        <title>Study of processes formation in drebrin cDNA transfected fibroblast cells.</title>
        <authorList>
            <person name="Ren Y."/>
            <person name="Kawai-Hirai R."/>
            <person name="Xue Y."/>
            <person name="Shirao T."/>
        </authorList>
    </citation>
    <scope>NUCLEOTIDE SEQUENCE [MRNA] (ISOFORM E1)</scope>
</reference>
<reference key="3">
    <citation type="journal article" date="2004" name="Genome Res.">
        <title>The status, quality, and expansion of the NIH full-length cDNA project: the Mammalian Gene Collection (MGC).</title>
        <authorList>
            <consortium name="The MGC Project Team"/>
        </authorList>
    </citation>
    <scope>NUCLEOTIDE SEQUENCE [LARGE SCALE MRNA] (ISOFORM E1)</scope>
    <source>
        <tissue>Embryonic brain</tissue>
    </source>
</reference>
<reference key="4">
    <citation type="journal article" date="2012" name="Nat. Commun.">
        <title>Quantitative maps of protein phosphorylation sites across 14 different rat organs and tissues.</title>
        <authorList>
            <person name="Lundby A."/>
            <person name="Secher A."/>
            <person name="Lage K."/>
            <person name="Nordsborg N.B."/>
            <person name="Dmytriyev A."/>
            <person name="Lundby C."/>
            <person name="Olsen J.V."/>
        </authorList>
    </citation>
    <scope>PHOSPHORYLATION [LARGE SCALE ANALYSIS] AT SER-142; SER-342 AND SER-385</scope>
    <scope>IDENTIFICATION BY MASS SPECTROMETRY [LARGE SCALE ANALYSIS]</scope>
</reference>
<evidence type="ECO:0000250" key="1"/>
<evidence type="ECO:0000250" key="2">
    <source>
        <dbReference type="UniProtKB" id="Q16643"/>
    </source>
</evidence>
<evidence type="ECO:0000250" key="3">
    <source>
        <dbReference type="UniProtKB" id="Q9QXS6"/>
    </source>
</evidence>
<evidence type="ECO:0000255" key="4">
    <source>
        <dbReference type="PROSITE-ProRule" id="PRU00599"/>
    </source>
</evidence>
<evidence type="ECO:0000256" key="5">
    <source>
        <dbReference type="SAM" id="MobiDB-lite"/>
    </source>
</evidence>
<evidence type="ECO:0000303" key="6">
    <source>
    </source>
</evidence>
<evidence type="ECO:0000303" key="7">
    <source ref="2"/>
</evidence>
<evidence type="ECO:0000305" key="8"/>
<evidence type="ECO:0007744" key="9">
    <source>
    </source>
</evidence>